<evidence type="ECO:0000256" key="1">
    <source>
        <dbReference type="SAM" id="MobiDB-lite"/>
    </source>
</evidence>
<evidence type="ECO:0000303" key="2">
    <source>
    </source>
</evidence>
<evidence type="ECO:0000305" key="3"/>
<evidence type="ECO:0000312" key="4">
    <source>
        <dbReference type="HGNC" id="HGNC:13787"/>
    </source>
</evidence>
<evidence type="ECO:0007744" key="5">
    <source>
    </source>
</evidence>
<evidence type="ECO:0007744" key="6">
    <source>
    </source>
</evidence>
<evidence type="ECO:0007744" key="7">
    <source>
    </source>
</evidence>
<evidence type="ECO:0007744" key="8">
    <source>
    </source>
</evidence>
<evidence type="ECO:0007744" key="9">
    <source>
    </source>
</evidence>
<evidence type="ECO:0007744" key="10">
    <source>
    </source>
</evidence>
<feature type="chain" id="PRO_0000143072" description="Bcl-2-like protein 12">
    <location>
        <begin position="1"/>
        <end position="250"/>
    </location>
</feature>
<feature type="region of interest" description="Disordered" evidence="1">
    <location>
        <begin position="24"/>
        <end position="46"/>
    </location>
</feature>
<feature type="short sequence motif" description="BH2">
    <location>
        <begin position="227"/>
        <end position="238"/>
    </location>
</feature>
<feature type="modified residue" description="Phosphoserine" evidence="5">
    <location>
        <position position="29"/>
    </location>
</feature>
<feature type="modified residue" description="Phosphothreonine" evidence="5">
    <location>
        <position position="33"/>
    </location>
</feature>
<feature type="modified residue" description="Phosphoserine" evidence="5">
    <location>
        <position position="37"/>
    </location>
</feature>
<feature type="modified residue" description="Omega-N-methylarginine" evidence="10">
    <location>
        <position position="60"/>
    </location>
</feature>
<feature type="modified residue" description="Phosphoserine" evidence="9">
    <location>
        <position position="111"/>
    </location>
</feature>
<feature type="modified residue" description="Phosphoserine" evidence="5 6 7">
    <location>
        <position position="158"/>
    </location>
</feature>
<feature type="modified residue" description="Phosphoserine" evidence="7">
    <location>
        <position position="159"/>
    </location>
</feature>
<feature type="modified residue" description="Phosphoserine" evidence="9">
    <location>
        <position position="161"/>
    </location>
</feature>
<feature type="modified residue" description="Phosphoserine" evidence="9">
    <location>
        <position position="189"/>
    </location>
</feature>
<feature type="splice variant" id="VSP_043269" description="In isoform 3." evidence="2">
    <location>
        <position position="36"/>
    </location>
</feature>
<feature type="splice variant" id="VSP_000522" description="In isoform 2." evidence="3">
    <original>SPAQEEPTDFLSRLRRCLPCSLGRGAAPSESPRPCSLPIRPCYGLEPGPATPDFYA</original>
    <variation>PSYSRLLCFGGPAAGTAGPRAAEISAQPRITGSPIDREGSHTAEAGGPAGGGGRSH</variation>
    <location>
        <begin position="37"/>
        <end position="92"/>
    </location>
</feature>
<feature type="splice variant" id="VSP_000523" description="In isoform 2." evidence="3">
    <location>
        <begin position="93"/>
        <end position="250"/>
    </location>
</feature>
<feature type="sequence conflict" description="In Ref. 3; AAH07724." evidence="3" ref="3">
    <original>P</original>
    <variation>S</variation>
    <location>
        <position position="186"/>
    </location>
</feature>
<accession>Q9HB09</accession>
<accession>A0A087WSV0</accession>
<accession>Q3SY11</accession>
<accession>Q3SY13</accession>
<accession>Q96I96</accession>
<accession>Q9HB08</accession>
<sequence length="250" mass="26908">MAGSEELGLREDTLRVLAAFLRRGEAAGSPVPTPPRSPAQEEPTDFLSRLRRCLPCSLGRGAAPSESPRPCSLPIRPCYGLEPGPATPDFYALVAQRLEQLVQEQLKSPPSPELQGPPSTEKEAILRRLVALLEEEAEVINQKLASDPALRSKLVRLSSDSFARLVELFCSRDDSSRPSRACPGPPPPSPEPLARLALAMELSRRVAGLGGTLAGLSVEHVHSFTPWIQAHGGWEGILAVSPVDLNLPLD</sequence>
<name>B2L12_HUMAN</name>
<organism>
    <name type="scientific">Homo sapiens</name>
    <name type="common">Human</name>
    <dbReference type="NCBI Taxonomy" id="9606"/>
    <lineage>
        <taxon>Eukaryota</taxon>
        <taxon>Metazoa</taxon>
        <taxon>Chordata</taxon>
        <taxon>Craniata</taxon>
        <taxon>Vertebrata</taxon>
        <taxon>Euteleostomi</taxon>
        <taxon>Mammalia</taxon>
        <taxon>Eutheria</taxon>
        <taxon>Euarchontoglires</taxon>
        <taxon>Primates</taxon>
        <taxon>Haplorrhini</taxon>
        <taxon>Catarrhini</taxon>
        <taxon>Hominidae</taxon>
        <taxon>Homo</taxon>
    </lineage>
</organism>
<protein>
    <recommendedName>
        <fullName evidence="3">Bcl-2-like protein 12</fullName>
        <shortName>Bcl2-L-12</shortName>
    </recommendedName>
    <alternativeName>
        <fullName>Bcl-2-related proline-rich protein</fullName>
    </alternativeName>
</protein>
<comment type="interaction">
    <interactant intactId="EBI-3940897">
        <id>Q9HB09</id>
    </interactant>
    <interactant intactId="EBI-516580">
        <id>Q07812</id>
        <label>BAX</label>
    </interactant>
    <organismsDiffer>false</organismsDiffer>
    <experiments>3</experiments>
</comment>
<comment type="interaction">
    <interactant intactId="EBI-6968951">
        <id>Q9HB09-1</id>
    </interactant>
    <interactant intactId="EBI-3390054">
        <id>P0CG48</id>
        <label>UBC</label>
    </interactant>
    <organismsDiffer>false</organismsDiffer>
    <experiments>3</experiments>
</comment>
<comment type="interaction">
    <interactant intactId="EBI-6969019">
        <id>Q9HB09-2</id>
    </interactant>
    <interactant intactId="EBI-629985">
        <id>P08107</id>
        <label>HSPA1B</label>
    </interactant>
    <organismsDiffer>false</organismsDiffer>
    <experiments>2</experiments>
</comment>
<comment type="alternative products">
    <event type="alternative splicing"/>
    <isoform>
        <id>Q9HB09-1</id>
        <name>1</name>
        <sequence type="displayed"/>
    </isoform>
    <isoform>
        <id>Q9HB09-2</id>
        <name>2</name>
        <sequence type="described" ref="VSP_000522 VSP_000523"/>
    </isoform>
    <isoform>
        <id>Q9HB09-3</id>
        <name>3</name>
        <sequence type="described" ref="VSP_043269"/>
    </isoform>
</comment>
<comment type="tissue specificity">
    <text>Expressed mainly in breast, thymus, prostate, fetal liver, colon, placenta, pancreas, small intestine, spinal cord, kidney, and bone marrow and to a lesser extent in many other tissues. Isoform 2 is primarily expressed in skeletal muscle.</text>
</comment>
<comment type="miscellaneous">
    <molecule>Isoform 2</molecule>
    <text evidence="3">May be produced at very low levels due to a premature stop codon in the mRNA, leading to nonsense-mediated mRNA decay.</text>
</comment>
<comment type="similarity">
    <text evidence="3">Belongs to the Bcl-2 family.</text>
</comment>
<comment type="sequence caution" evidence="3">
    <conflict type="erroneous initiation">
        <sequence resource="EMBL-CDS" id="AAG29495"/>
    </conflict>
    <text>Extended N-terminus.</text>
</comment>
<comment type="sequence caution" evidence="3">
    <conflict type="erroneous initiation">
        <sequence resource="EMBL-CDS" id="AAG29496"/>
    </conflict>
    <text>Extended N-terminus.</text>
</comment>
<comment type="sequence caution" evidence="3">
    <conflict type="erroneous initiation">
        <sequence resource="EMBL-CDS" id="AAH07724"/>
    </conflict>
    <text>Extended N-terminus.</text>
</comment>
<comment type="sequence caution" evidence="3">
    <conflict type="erroneous initiation">
        <sequence resource="EMBL-CDS" id="AAI04005"/>
    </conflict>
    <text>Extended N-terminus.</text>
</comment>
<comment type="sequence caution" evidence="3">
    <conflict type="erroneous initiation">
        <sequence resource="EMBL-CDS" id="AAI04006"/>
    </conflict>
    <text>Extended N-terminus.</text>
</comment>
<comment type="sequence caution" evidence="3">
    <conflict type="erroneous initiation">
        <sequence resource="EMBL-CDS" id="AAI04007"/>
    </conflict>
    <text>Extended N-terminus.</text>
</comment>
<comment type="online information" name="Atlas of Genetics and Cytogenetics in Oncology and Haematology">
    <link uri="https://atlasgeneticsoncology.org/gene/773/BCL2L12"/>
</comment>
<gene>
    <name evidence="4" type="primary">BCL2L12</name>
    <name type="synonym">BPR</name>
</gene>
<dbReference type="EMBL" id="AF289220">
    <property type="protein sequence ID" value="AAG29495.1"/>
    <property type="status" value="ALT_INIT"/>
    <property type="molecule type" value="Genomic_DNA"/>
</dbReference>
<dbReference type="EMBL" id="AF289220">
    <property type="protein sequence ID" value="AAG29496.1"/>
    <property type="status" value="ALT_INIT"/>
    <property type="molecule type" value="Genomic_DNA"/>
</dbReference>
<dbReference type="EMBL" id="AC011495">
    <property type="status" value="NOT_ANNOTATED_CDS"/>
    <property type="molecule type" value="Genomic_DNA"/>
</dbReference>
<dbReference type="EMBL" id="BC007724">
    <property type="protein sequence ID" value="AAH07724.2"/>
    <property type="status" value="ALT_INIT"/>
    <property type="molecule type" value="mRNA"/>
</dbReference>
<dbReference type="EMBL" id="BC104004">
    <property type="protein sequence ID" value="AAI04005.1"/>
    <property type="status" value="ALT_INIT"/>
    <property type="molecule type" value="mRNA"/>
</dbReference>
<dbReference type="EMBL" id="BC104005">
    <property type="protein sequence ID" value="AAI04006.1"/>
    <property type="status" value="ALT_INIT"/>
    <property type="molecule type" value="mRNA"/>
</dbReference>
<dbReference type="EMBL" id="BC104006">
    <property type="protein sequence ID" value="AAI04007.1"/>
    <property type="status" value="ALT_INIT"/>
    <property type="molecule type" value="mRNA"/>
</dbReference>
<dbReference type="CCDS" id="CCDS12776.2">
    <molecule id="Q9HB09-1"/>
</dbReference>
<dbReference type="CCDS" id="CCDS46144.2">
    <molecule id="Q9HB09-3"/>
</dbReference>
<dbReference type="CCDS" id="CCDS92666.1">
    <molecule id="Q9HB09-2"/>
</dbReference>
<dbReference type="RefSeq" id="NP_001035758.2">
    <molecule id="Q9HB09-3"/>
    <property type="nucleotide sequence ID" value="NM_001040668.2"/>
</dbReference>
<dbReference type="RefSeq" id="NP_001269445.1">
    <property type="nucleotide sequence ID" value="NM_001282516.1"/>
</dbReference>
<dbReference type="RefSeq" id="NP_001269446.2">
    <molecule id="Q9HB09-2"/>
    <property type="nucleotide sequence ID" value="NM_001282517.2"/>
</dbReference>
<dbReference type="RefSeq" id="NP_001269448.1">
    <property type="nucleotide sequence ID" value="NM_001282519.1"/>
</dbReference>
<dbReference type="RefSeq" id="NP_001269449.1">
    <property type="nucleotide sequence ID" value="NM_001282520.1"/>
</dbReference>
<dbReference type="RefSeq" id="NP_001269450.1">
    <property type="nucleotide sequence ID" value="NM_001282521.1"/>
</dbReference>
<dbReference type="RefSeq" id="NP_619580.2">
    <molecule id="Q9HB09-1"/>
    <property type="nucleotide sequence ID" value="NM_138639.2"/>
</dbReference>
<dbReference type="RefSeq" id="XP_016882835.1">
    <property type="nucleotide sequence ID" value="XM_017027346.1"/>
</dbReference>
<dbReference type="BioGRID" id="123692">
    <property type="interactions" value="56"/>
</dbReference>
<dbReference type="FunCoup" id="Q9HB09">
    <property type="interactions" value="552"/>
</dbReference>
<dbReference type="IntAct" id="Q9HB09">
    <property type="interactions" value="35"/>
</dbReference>
<dbReference type="MINT" id="Q9HB09"/>
<dbReference type="STRING" id="9606.ENSP00000482218"/>
<dbReference type="GlyGen" id="Q9HB09">
    <property type="glycosylation" value="1 site, 1 O-linked glycan (1 site)"/>
</dbReference>
<dbReference type="iPTMnet" id="Q9HB09"/>
<dbReference type="PhosphoSitePlus" id="Q9HB09"/>
<dbReference type="SwissPalm" id="Q9HB09"/>
<dbReference type="BioMuta" id="BCL2L12"/>
<dbReference type="DMDM" id="23396468"/>
<dbReference type="jPOST" id="Q9HB09"/>
<dbReference type="MassIVE" id="Q9HB09"/>
<dbReference type="PaxDb" id="9606-ENSP00000482218"/>
<dbReference type="PeptideAtlas" id="Q9HB09"/>
<dbReference type="ProteomicsDB" id="81467">
    <molecule id="Q9HB09-1"/>
</dbReference>
<dbReference type="ProteomicsDB" id="81468">
    <molecule id="Q9HB09-2"/>
</dbReference>
<dbReference type="ProteomicsDB" id="81469">
    <molecule id="Q9HB09-3"/>
</dbReference>
<dbReference type="Pumba" id="Q9HB09"/>
<dbReference type="Antibodypedia" id="18662">
    <property type="antibodies" value="215 antibodies from 31 providers"/>
</dbReference>
<dbReference type="DNASU" id="83596"/>
<dbReference type="Ensembl" id="ENST00000246784.8">
    <molecule id="Q9HB09-1"/>
    <property type="protein sequence ID" value="ENSP00000246784.4"/>
    <property type="gene ID" value="ENSG00000126453.11"/>
</dbReference>
<dbReference type="Ensembl" id="ENST00000246785.7">
    <molecule id="Q9HB09-1"/>
    <property type="protein sequence ID" value="ENSP00000246785.3"/>
    <property type="gene ID" value="ENSG00000126453.11"/>
</dbReference>
<dbReference type="Ensembl" id="ENST00000441864.6">
    <molecule id="Q9HB09-3"/>
    <property type="protein sequence ID" value="ENSP00000393803.2"/>
    <property type="gene ID" value="ENSG00000126453.11"/>
</dbReference>
<dbReference type="Ensembl" id="ENST00000594157.5">
    <molecule id="Q9HB09-2"/>
    <property type="protein sequence ID" value="ENSP00000469216.2"/>
    <property type="gene ID" value="ENSG00000126453.11"/>
</dbReference>
<dbReference type="Ensembl" id="ENST00000598979.5">
    <molecule id="Q9HB09-2"/>
    <property type="protein sequence ID" value="ENSP00000471919.2"/>
    <property type="gene ID" value="ENSG00000126453.11"/>
</dbReference>
<dbReference type="Ensembl" id="ENST00000698560.1">
    <molecule id="Q9HB09-2"/>
    <property type="protein sequence ID" value="ENSP00000513802.1"/>
    <property type="gene ID" value="ENSG00000126453.11"/>
</dbReference>
<dbReference type="GeneID" id="83596"/>
<dbReference type="KEGG" id="hsa:83596"/>
<dbReference type="MANE-Select" id="ENST00000246784.8">
    <property type="protein sequence ID" value="ENSP00000246784.4"/>
    <property type="RefSeq nucleotide sequence ID" value="NM_138639.2"/>
    <property type="RefSeq protein sequence ID" value="NP_619580.2"/>
</dbReference>
<dbReference type="UCSC" id="uc002ppa.4">
    <molecule id="Q9HB09-1"/>
    <property type="organism name" value="human"/>
</dbReference>
<dbReference type="AGR" id="HGNC:13787"/>
<dbReference type="CTD" id="83596"/>
<dbReference type="DisGeNET" id="83596"/>
<dbReference type="GeneCards" id="BCL2L12"/>
<dbReference type="HGNC" id="HGNC:13787">
    <property type="gene designation" value="BCL2L12"/>
</dbReference>
<dbReference type="HPA" id="ENSG00000126453">
    <property type="expression patterns" value="Low tissue specificity"/>
</dbReference>
<dbReference type="MIM" id="610837">
    <property type="type" value="gene"/>
</dbReference>
<dbReference type="neXtProt" id="NX_Q9HB09"/>
<dbReference type="OpenTargets" id="ENSG00000126453"/>
<dbReference type="PharmGKB" id="PA25306"/>
<dbReference type="VEuPathDB" id="HostDB:ENSG00000126453"/>
<dbReference type="eggNOG" id="ENOG502RYM6">
    <property type="taxonomic scope" value="Eukaryota"/>
</dbReference>
<dbReference type="GeneTree" id="ENSGT00940000154318"/>
<dbReference type="InParanoid" id="Q9HB09"/>
<dbReference type="OrthoDB" id="9948760at2759"/>
<dbReference type="PAN-GO" id="Q9HB09">
    <property type="GO annotations" value="1 GO annotation based on evolutionary models"/>
</dbReference>
<dbReference type="PhylomeDB" id="Q9HB09"/>
<dbReference type="TreeFam" id="TF338350"/>
<dbReference type="PathwayCommons" id="Q9HB09"/>
<dbReference type="SignaLink" id="Q9HB09"/>
<dbReference type="SIGNOR" id="Q9HB09"/>
<dbReference type="BioGRID-ORCS" id="83596">
    <property type="hits" value="49 hits in 1156 CRISPR screens"/>
</dbReference>
<dbReference type="ChiTaRS" id="BCL2L12">
    <property type="organism name" value="human"/>
</dbReference>
<dbReference type="GeneWiki" id="BCL2L12"/>
<dbReference type="GenomeRNAi" id="83596"/>
<dbReference type="Pharos" id="Q9HB09">
    <property type="development level" value="Tbio"/>
</dbReference>
<dbReference type="PRO" id="PR:Q9HB09"/>
<dbReference type="Proteomes" id="UP000005640">
    <property type="component" value="Chromosome 19"/>
</dbReference>
<dbReference type="RNAct" id="Q9HB09">
    <property type="molecule type" value="protein"/>
</dbReference>
<dbReference type="Bgee" id="ENSG00000126453">
    <property type="expression patterns" value="Expressed in primordial germ cell in gonad and 132 other cell types or tissues"/>
</dbReference>
<dbReference type="ExpressionAtlas" id="Q9HB09">
    <property type="expression patterns" value="baseline and differential"/>
</dbReference>
<dbReference type="GO" id="GO:0016020">
    <property type="term" value="C:membrane"/>
    <property type="evidence" value="ECO:0007005"/>
    <property type="project" value="UniProtKB"/>
</dbReference>
<dbReference type="GO" id="GO:0005634">
    <property type="term" value="C:nucleus"/>
    <property type="evidence" value="ECO:0000314"/>
    <property type="project" value="MGI"/>
</dbReference>
<dbReference type="GO" id="GO:0002039">
    <property type="term" value="F:p53 binding"/>
    <property type="evidence" value="ECO:0007669"/>
    <property type="project" value="Ensembl"/>
</dbReference>
<dbReference type="GO" id="GO:0006915">
    <property type="term" value="P:apoptotic process"/>
    <property type="evidence" value="ECO:0007669"/>
    <property type="project" value="UniProtKB-KW"/>
</dbReference>
<dbReference type="GO" id="GO:0043066">
    <property type="term" value="P:negative regulation of apoptotic process"/>
    <property type="evidence" value="ECO:0000314"/>
    <property type="project" value="UniProtKB"/>
</dbReference>
<dbReference type="GO" id="GO:2000773">
    <property type="term" value="P:negative regulation of cellular senescence"/>
    <property type="evidence" value="ECO:0007669"/>
    <property type="project" value="Ensembl"/>
</dbReference>
<dbReference type="GO" id="GO:1902166">
    <property type="term" value="P:negative regulation of intrinsic apoptotic signaling pathway in response to DNA damage by p53 class mediator"/>
    <property type="evidence" value="ECO:0007669"/>
    <property type="project" value="Ensembl"/>
</dbReference>
<dbReference type="GO" id="GO:0045944">
    <property type="term" value="P:positive regulation of transcription by RNA polymerase II"/>
    <property type="evidence" value="ECO:0000314"/>
    <property type="project" value="UniProtKB"/>
</dbReference>
<dbReference type="InterPro" id="IPR036834">
    <property type="entry name" value="Bcl-2-like_sf"/>
</dbReference>
<dbReference type="PANTHER" id="PTHR14965:SF2">
    <property type="entry name" value="BCL-2-LIKE PROTEIN 12"/>
    <property type="match status" value="1"/>
</dbReference>
<dbReference type="PANTHER" id="PTHR14965">
    <property type="entry name" value="SI:CH73-248E21.1"/>
    <property type="match status" value="1"/>
</dbReference>
<dbReference type="SUPFAM" id="SSF56854">
    <property type="entry name" value="Bcl-2 inhibitors of programmed cell death"/>
    <property type="match status" value="1"/>
</dbReference>
<reference key="1">
    <citation type="journal article" date="2001" name="Genomics">
        <title>Molecular cloning, physical mapping, and expression analysis of a novel gene, BCL2L12, encoding a proline-rich protein with a highly conserved BH2 domain of the Bcl-2 family.</title>
        <authorList>
            <person name="Scorilas A."/>
            <person name="Kyriakopoulou L."/>
            <person name="Yousef G.M."/>
            <person name="Ashworth L.K."/>
            <person name="Kwamie A."/>
            <person name="Diamandis E.P."/>
        </authorList>
    </citation>
    <scope>NUCLEOTIDE SEQUENCE [GENOMIC DNA] (ISOFORM 1)</scope>
</reference>
<reference key="2">
    <citation type="journal article" date="2004" name="Nature">
        <title>The DNA sequence and biology of human chromosome 19.</title>
        <authorList>
            <person name="Grimwood J."/>
            <person name="Gordon L.A."/>
            <person name="Olsen A.S."/>
            <person name="Terry A."/>
            <person name="Schmutz J."/>
            <person name="Lamerdin J.E."/>
            <person name="Hellsten U."/>
            <person name="Goodstein D."/>
            <person name="Couronne O."/>
            <person name="Tran-Gyamfi M."/>
            <person name="Aerts A."/>
            <person name="Altherr M."/>
            <person name="Ashworth L."/>
            <person name="Bajorek E."/>
            <person name="Black S."/>
            <person name="Branscomb E."/>
            <person name="Caenepeel S."/>
            <person name="Carrano A.V."/>
            <person name="Caoile C."/>
            <person name="Chan Y.M."/>
            <person name="Christensen M."/>
            <person name="Cleland C.A."/>
            <person name="Copeland A."/>
            <person name="Dalin E."/>
            <person name="Dehal P."/>
            <person name="Denys M."/>
            <person name="Detter J.C."/>
            <person name="Escobar J."/>
            <person name="Flowers D."/>
            <person name="Fotopulos D."/>
            <person name="Garcia C."/>
            <person name="Georgescu A.M."/>
            <person name="Glavina T."/>
            <person name="Gomez M."/>
            <person name="Gonzales E."/>
            <person name="Groza M."/>
            <person name="Hammon N."/>
            <person name="Hawkins T."/>
            <person name="Haydu L."/>
            <person name="Ho I."/>
            <person name="Huang W."/>
            <person name="Israni S."/>
            <person name="Jett J."/>
            <person name="Kadner K."/>
            <person name="Kimball H."/>
            <person name="Kobayashi A."/>
            <person name="Larionov V."/>
            <person name="Leem S.-H."/>
            <person name="Lopez F."/>
            <person name="Lou Y."/>
            <person name="Lowry S."/>
            <person name="Malfatti S."/>
            <person name="Martinez D."/>
            <person name="McCready P.M."/>
            <person name="Medina C."/>
            <person name="Morgan J."/>
            <person name="Nelson K."/>
            <person name="Nolan M."/>
            <person name="Ovcharenko I."/>
            <person name="Pitluck S."/>
            <person name="Pollard M."/>
            <person name="Popkie A.P."/>
            <person name="Predki P."/>
            <person name="Quan G."/>
            <person name="Ramirez L."/>
            <person name="Rash S."/>
            <person name="Retterer J."/>
            <person name="Rodriguez A."/>
            <person name="Rogers S."/>
            <person name="Salamov A."/>
            <person name="Salazar A."/>
            <person name="She X."/>
            <person name="Smith D."/>
            <person name="Slezak T."/>
            <person name="Solovyev V."/>
            <person name="Thayer N."/>
            <person name="Tice H."/>
            <person name="Tsai M."/>
            <person name="Ustaszewska A."/>
            <person name="Vo N."/>
            <person name="Wagner M."/>
            <person name="Wheeler J."/>
            <person name="Wu K."/>
            <person name="Xie G."/>
            <person name="Yang J."/>
            <person name="Dubchak I."/>
            <person name="Furey T.S."/>
            <person name="DeJong P."/>
            <person name="Dickson M."/>
            <person name="Gordon D."/>
            <person name="Eichler E.E."/>
            <person name="Pennacchio L.A."/>
            <person name="Richardson P."/>
            <person name="Stubbs L."/>
            <person name="Rokhsar D.S."/>
            <person name="Myers R.M."/>
            <person name="Rubin E.M."/>
            <person name="Lucas S.M."/>
        </authorList>
    </citation>
    <scope>NUCLEOTIDE SEQUENCE [LARGE SCALE GENOMIC DNA]</scope>
</reference>
<reference key="3">
    <citation type="journal article" date="2004" name="Genome Res.">
        <title>The status, quality, and expansion of the NIH full-length cDNA project: the Mammalian Gene Collection (MGC).</title>
        <authorList>
            <consortium name="The MGC Project Team"/>
        </authorList>
    </citation>
    <scope>NUCLEOTIDE SEQUENCE [LARGE SCALE MRNA] (ISOFORM 1)</scope>
    <source>
        <tissue>Uterus</tissue>
    </source>
</reference>
<reference key="4">
    <citation type="journal article" date="2004" name="Genome Biol.">
        <title>An unappreciated role for RNA surveillance.</title>
        <authorList>
            <person name="Hillman R.T."/>
            <person name="Green R.E."/>
            <person name="Brenner S.E."/>
        </authorList>
    </citation>
    <scope>SPLICE ISOFORM(S) THAT ARE POTENTIAL NMD TARGET(S)</scope>
</reference>
<reference evidence="5" key="5">
    <citation type="journal article" date="2008" name="Proc. Natl. Acad. Sci. U.S.A.">
        <title>A quantitative atlas of mitotic phosphorylation.</title>
        <authorList>
            <person name="Dephoure N."/>
            <person name="Zhou C."/>
            <person name="Villen J."/>
            <person name="Beausoleil S.A."/>
            <person name="Bakalarski C.E."/>
            <person name="Elledge S.J."/>
            <person name="Gygi S.P."/>
        </authorList>
    </citation>
    <scope>PHOSPHORYLATION [LARGE SCALE ANALYSIS] AT SER-29; THR-33; SER-37 AND SER-158</scope>
    <scope>IDENTIFICATION BY MASS SPECTROMETRY [LARGE SCALE ANALYSIS]</scope>
    <source>
        <tissue>Cervix carcinoma</tissue>
    </source>
</reference>
<reference key="6">
    <citation type="journal article" date="2009" name="Anal. Chem.">
        <title>Lys-N and trypsin cover complementary parts of the phosphoproteome in a refined SCX-based approach.</title>
        <authorList>
            <person name="Gauci S."/>
            <person name="Helbig A.O."/>
            <person name="Slijper M."/>
            <person name="Krijgsveld J."/>
            <person name="Heck A.J."/>
            <person name="Mohammed S."/>
        </authorList>
    </citation>
    <scope>IDENTIFICATION BY MASS SPECTROMETRY [LARGE SCALE ANALYSIS]</scope>
</reference>
<reference key="7">
    <citation type="journal article" date="2010" name="Sci. Signal.">
        <title>Quantitative phosphoproteomics reveals widespread full phosphorylation site occupancy during mitosis.</title>
        <authorList>
            <person name="Olsen J.V."/>
            <person name="Vermeulen M."/>
            <person name="Santamaria A."/>
            <person name="Kumar C."/>
            <person name="Miller M.L."/>
            <person name="Jensen L.J."/>
            <person name="Gnad F."/>
            <person name="Cox J."/>
            <person name="Jensen T.S."/>
            <person name="Nigg E.A."/>
            <person name="Brunak S."/>
            <person name="Mann M."/>
        </authorList>
    </citation>
    <scope>PHOSPHORYLATION [LARGE SCALE ANALYSIS] AT SER-158</scope>
    <scope>IDENTIFICATION BY MASS SPECTROMETRY [LARGE SCALE ANALYSIS]</scope>
    <source>
        <tissue>Cervix carcinoma</tissue>
    </source>
</reference>
<reference key="8">
    <citation type="journal article" date="2011" name="Sci. Signal.">
        <title>System-wide temporal characterization of the proteome and phosphoproteome of human embryonic stem cell differentiation.</title>
        <authorList>
            <person name="Rigbolt K.T."/>
            <person name="Prokhorova T.A."/>
            <person name="Akimov V."/>
            <person name="Henningsen J."/>
            <person name="Johansen P.T."/>
            <person name="Kratchmarova I."/>
            <person name="Kassem M."/>
            <person name="Mann M."/>
            <person name="Olsen J.V."/>
            <person name="Blagoev B."/>
        </authorList>
    </citation>
    <scope>PHOSPHORYLATION [LARGE SCALE ANALYSIS] AT SER-158 AND SER-159</scope>
    <scope>IDENTIFICATION BY MASS SPECTROMETRY [LARGE SCALE ANALYSIS]</scope>
</reference>
<reference evidence="8" key="9">
    <citation type="journal article" date="2012" name="Proc. Natl. Acad. Sci. U.S.A.">
        <title>N-terminal acetylome analyses and functional insights of the N-terminal acetyltransferase NatB.</title>
        <authorList>
            <person name="Van Damme P."/>
            <person name="Lasa M."/>
            <person name="Polevoda B."/>
            <person name="Gazquez C."/>
            <person name="Elosegui-Artola A."/>
            <person name="Kim D.S."/>
            <person name="De Juan-Pardo E."/>
            <person name="Demeyer K."/>
            <person name="Hole K."/>
            <person name="Larrea E."/>
            <person name="Timmerman E."/>
            <person name="Prieto J."/>
            <person name="Arnesen T."/>
            <person name="Sherman F."/>
            <person name="Gevaert K."/>
            <person name="Aldabe R."/>
        </authorList>
    </citation>
    <scope>IDENTIFICATION BY MASS SPECTROMETRY [LARGE SCALE ANALYSIS]</scope>
</reference>
<reference key="10">
    <citation type="journal article" date="2013" name="J. Proteome Res.">
        <title>Toward a comprehensive characterization of a human cancer cell phosphoproteome.</title>
        <authorList>
            <person name="Zhou H."/>
            <person name="Di Palma S."/>
            <person name="Preisinger C."/>
            <person name="Peng M."/>
            <person name="Polat A.N."/>
            <person name="Heck A.J."/>
            <person name="Mohammed S."/>
        </authorList>
    </citation>
    <scope>PHOSPHORYLATION [LARGE SCALE ANALYSIS] AT SER-111; SER-161 AND SER-189</scope>
    <scope>IDENTIFICATION BY MASS SPECTROMETRY [LARGE SCALE ANALYSIS]</scope>
    <source>
        <tissue>Cervix carcinoma</tissue>
        <tissue>Erythroleukemia</tissue>
    </source>
</reference>
<reference key="11">
    <citation type="journal article" date="2014" name="J. Proteomics">
        <title>An enzyme assisted RP-RPLC approach for in-depth analysis of human liver phosphoproteome.</title>
        <authorList>
            <person name="Bian Y."/>
            <person name="Song C."/>
            <person name="Cheng K."/>
            <person name="Dong M."/>
            <person name="Wang F."/>
            <person name="Huang J."/>
            <person name="Sun D."/>
            <person name="Wang L."/>
            <person name="Ye M."/>
            <person name="Zou H."/>
        </authorList>
    </citation>
    <scope>IDENTIFICATION BY MASS SPECTROMETRY [LARGE SCALE ANALYSIS]</scope>
    <source>
        <tissue>Liver</tissue>
    </source>
</reference>
<reference key="12">
    <citation type="journal article" date="2014" name="Mol. Cell. Proteomics">
        <title>Immunoaffinity enrichment and mass spectrometry analysis of protein methylation.</title>
        <authorList>
            <person name="Guo A."/>
            <person name="Gu H."/>
            <person name="Zhou J."/>
            <person name="Mulhern D."/>
            <person name="Wang Y."/>
            <person name="Lee K.A."/>
            <person name="Yang V."/>
            <person name="Aguiar M."/>
            <person name="Kornhauser J."/>
            <person name="Jia X."/>
            <person name="Ren J."/>
            <person name="Beausoleil S.A."/>
            <person name="Silva J.C."/>
            <person name="Vemulapalli V."/>
            <person name="Bedford M.T."/>
            <person name="Comb M.J."/>
        </authorList>
    </citation>
    <scope>METHYLATION [LARGE SCALE ANALYSIS] AT ARG-60</scope>
    <scope>IDENTIFICATION BY MASS SPECTROMETRY [LARGE SCALE ANALYSIS]</scope>
    <source>
        <tissue>Colon carcinoma</tissue>
    </source>
</reference>
<keyword id="KW-0025">Alternative splicing</keyword>
<keyword id="KW-0053">Apoptosis</keyword>
<keyword id="KW-0488">Methylation</keyword>
<keyword id="KW-0597">Phosphoprotein</keyword>
<keyword id="KW-1267">Proteomics identification</keyword>
<keyword id="KW-1185">Reference proteome</keyword>
<proteinExistence type="evidence at protein level"/>